<dbReference type="EC" id="2.4.1.17"/>
<dbReference type="EMBL" id="X74116">
    <property type="protein sequence ID" value="CAA52214.1"/>
    <property type="molecule type" value="mRNA"/>
</dbReference>
<dbReference type="SMR" id="Q91280"/>
<dbReference type="CAZy" id="GT1">
    <property type="family name" value="Glycosyltransferase Family 1"/>
</dbReference>
<dbReference type="GlyCosmos" id="Q91280">
    <property type="glycosylation" value="3 sites, No reported glycans"/>
</dbReference>
<dbReference type="GO" id="GO:0005789">
    <property type="term" value="C:endoplasmic reticulum membrane"/>
    <property type="evidence" value="ECO:0007669"/>
    <property type="project" value="UniProtKB-SubCell"/>
</dbReference>
<dbReference type="GO" id="GO:0015020">
    <property type="term" value="F:glucuronosyltransferase activity"/>
    <property type="evidence" value="ECO:0007669"/>
    <property type="project" value="UniProtKB-EC"/>
</dbReference>
<dbReference type="CDD" id="cd03784">
    <property type="entry name" value="GT1_Gtf-like"/>
    <property type="match status" value="1"/>
</dbReference>
<dbReference type="FunFam" id="3.40.50.2000:FF:000021">
    <property type="entry name" value="UDP-glucuronosyltransferase"/>
    <property type="match status" value="1"/>
</dbReference>
<dbReference type="Gene3D" id="3.40.50.2000">
    <property type="entry name" value="Glycogen Phosphorylase B"/>
    <property type="match status" value="2"/>
</dbReference>
<dbReference type="InterPro" id="IPR050271">
    <property type="entry name" value="UDP-glycosyltransferase"/>
</dbReference>
<dbReference type="InterPro" id="IPR002213">
    <property type="entry name" value="UDP_glucos_trans"/>
</dbReference>
<dbReference type="InterPro" id="IPR035595">
    <property type="entry name" value="UDP_glycos_trans_CS"/>
</dbReference>
<dbReference type="PANTHER" id="PTHR48043">
    <property type="entry name" value="EG:EG0003.4 PROTEIN-RELATED"/>
    <property type="match status" value="1"/>
</dbReference>
<dbReference type="PANTHER" id="PTHR48043:SF161">
    <property type="entry name" value="UDP GLUCURONOSYLTRANSFERASE FAMILY 1 MEMBER A1"/>
    <property type="match status" value="1"/>
</dbReference>
<dbReference type="Pfam" id="PF00201">
    <property type="entry name" value="UDPGT"/>
    <property type="match status" value="1"/>
</dbReference>
<dbReference type="SUPFAM" id="SSF53756">
    <property type="entry name" value="UDP-Glycosyltransferase/glycogen phosphorylase"/>
    <property type="match status" value="1"/>
</dbReference>
<dbReference type="PROSITE" id="PS00375">
    <property type="entry name" value="UDPGT"/>
    <property type="match status" value="1"/>
</dbReference>
<gene>
    <name type="primary">ugt3</name>
</gene>
<keyword id="KW-0256">Endoplasmic reticulum</keyword>
<keyword id="KW-0325">Glycoprotein</keyword>
<keyword id="KW-0328">Glycosyltransferase</keyword>
<keyword id="KW-0472">Membrane</keyword>
<keyword id="KW-0492">Microsome</keyword>
<keyword id="KW-0808">Transferase</keyword>
<keyword id="KW-0812">Transmembrane</keyword>
<keyword id="KW-1133">Transmembrane helix</keyword>
<reference key="1">
    <citation type="journal article" date="1995" name="Mar. Environ. Res.">
        <title>Cloning of the major 3-MC inducible phase I and phase II detoxification enzymes of plaice liver.</title>
        <authorList>
            <person name="Pirrit L."/>
            <person name="Healey R."/>
            <person name="Assheton H."/>
            <person name="Leaver M.J."/>
            <person name="George S.G."/>
        </authorList>
    </citation>
    <scope>NUCLEOTIDE SEQUENCE [MRNA]</scope>
    <source>
        <tissue>Liver</tissue>
    </source>
</reference>
<proteinExistence type="evidence at transcript level"/>
<name>UGT3_PLEPL</name>
<organism>
    <name type="scientific">Pleuronectes platessa</name>
    <name type="common">European plaice</name>
    <dbReference type="NCBI Taxonomy" id="8262"/>
    <lineage>
        <taxon>Eukaryota</taxon>
        <taxon>Metazoa</taxon>
        <taxon>Chordata</taxon>
        <taxon>Craniata</taxon>
        <taxon>Vertebrata</taxon>
        <taxon>Euteleostomi</taxon>
        <taxon>Actinopterygii</taxon>
        <taxon>Neopterygii</taxon>
        <taxon>Teleostei</taxon>
        <taxon>Neoteleostei</taxon>
        <taxon>Acanthomorphata</taxon>
        <taxon>Carangaria</taxon>
        <taxon>Pleuronectiformes</taxon>
        <taxon>Pleuronectoidei</taxon>
        <taxon>Pleuronectidae</taxon>
        <taxon>Pleuronectes</taxon>
    </lineage>
</organism>
<accession>Q91280</accession>
<evidence type="ECO:0000250" key="1"/>
<evidence type="ECO:0000255" key="2"/>
<evidence type="ECO:0000305" key="3"/>
<protein>
    <recommendedName>
        <fullName>UDP-glucuronosyltransferase</fullName>
        <shortName>UDPGT</shortName>
        <ecNumber>2.4.1.17</ecNumber>
    </recommendedName>
</protein>
<feature type="chain" id="PRO_0000074137" description="UDP-glucuronosyltransferase">
    <location>
        <begin position="1" status="less than"/>
        <end position="472"/>
    </location>
</feature>
<feature type="transmembrane region" description="Helical" evidence="2">
    <location>
        <begin position="436"/>
        <end position="456"/>
    </location>
</feature>
<feature type="glycosylation site" description="N-linked (GlcNAc...) asparagine" evidence="2">
    <location>
        <position position="59"/>
    </location>
</feature>
<feature type="glycosylation site" description="N-linked (GlcNAc...) asparagine" evidence="2">
    <location>
        <position position="227"/>
    </location>
</feature>
<feature type="glycosylation site" description="N-linked (GlcNAc...) asparagine" evidence="2">
    <location>
        <position position="377"/>
    </location>
</feature>
<feature type="non-terminal residue">
    <location>
        <position position="1"/>
    </location>
</feature>
<sequence length="472" mass="53781">LVPESSLFMHQSEDYETEVYPVSFTTEEMDATHKQLKDGLFLKQPDWTEYYVNIMRFVNFTSIHLRGCENLLENQPLMSRMRGMGFDIVLTDPFFPCGALVGNIFSIPVVNFLRGLPCGLDMKVNKCPSPPSYIPVPYSGNTNIMTFPQRVINMAMTVVESYQCSLLYGHYDEMVSKYVGNNMDYRTLLSHGALWLIRNEFTLDWPRPLLPNMVLIGGINCAEKKKNASLPADLEEFVQGSGDDGFIIFTLGSMLPDMPQEKAQHFLDAFRQIPQRVVWRYAGDPPKGLPKNVRLMKWLPQKELLAHPKAKLFLTHGGSHSVYEGICNAVPMLMFPLFAEQGDNGLRMVTRGAAETLNIYDVTSDNLLAALNKILKNKSYKEKITEMSQIHHDRPVAPLDLAIFWTEFVIRHKGASHLRVAAHELNWIQYHSLDVFGFILLILLTVLWVTLKCCLFCTRRCCRRGTAKTKSE</sequence>
<comment type="function">
    <text>UDPGT is of major importance in the conjugation and subsequent elimination of potentially toxic xenobiotics and endogenous compounds.</text>
</comment>
<comment type="catalytic activity">
    <reaction>
        <text>glucuronate acceptor + UDP-alpha-D-glucuronate = acceptor beta-D-glucuronoside + UDP + H(+)</text>
        <dbReference type="Rhea" id="RHEA:21032"/>
        <dbReference type="ChEBI" id="CHEBI:15378"/>
        <dbReference type="ChEBI" id="CHEBI:58052"/>
        <dbReference type="ChEBI" id="CHEBI:58223"/>
        <dbReference type="ChEBI" id="CHEBI:132367"/>
        <dbReference type="ChEBI" id="CHEBI:132368"/>
        <dbReference type="EC" id="2.4.1.17"/>
    </reaction>
</comment>
<comment type="subcellular location">
    <subcellularLocation>
        <location evidence="1">Microsome membrane</location>
        <topology evidence="1">Single-pass membrane protein</topology>
    </subcellularLocation>
    <subcellularLocation>
        <location evidence="3">Endoplasmic reticulum membrane</location>
        <topology evidence="3">Single-pass membrane protein</topology>
    </subcellularLocation>
</comment>
<comment type="similarity">
    <text evidence="3">Belongs to the UDP-glycosyltransferase family.</text>
</comment>